<name>POLZ2_DROME</name>
<sequence length="198" mass="23147">MQAEIKADIIVEAMEVLVNHILYVRGIYPSHIFKMKRMYNSPIYVSIFPPLNNYLAGVLKSAQELLRRRELQCLELIVYQKENEKLESYKMQLETQRSGLPAEDHLMEFEQNMRSVIYKISQRLNQAPKLPAGSCQFKVHLHTTQEAFIRFSHDSQYQEFPWLQTQKTESQATGRTVYLLPLARVDDLGLKMDVLIVN</sequence>
<comment type="function">
    <text evidence="2 3">As the accessory component of the DNA polymerase zeta complex, involved in translesion DNA synthesis (TLS) and various DNA repair mechanisms (PubMed:15175013, PubMed:16507570). Promotes the apurinic/apyrimidinic (AP) endonuclease activity of Rrp1 and is therefore likely to be involved in the base excision repair (BER) pathway responsible for repair of DNA lesions (PubMed:16507570). It does not appear to influence the synthesis activity of the catalytic component Dmpol-zeta (PubMed:15175013).</text>
</comment>
<comment type="subunit">
    <text evidence="2 3">Accessory subunit of the zeta DNA polymerase complex, which consists of the catalytic component PolZ1/DNApol-zeta and PolZ2/Rev7 (PubMed:15175013, PubMed:16507570). Interacts with the apurinic/apyrimidinic (AP) endonuclease Rrp1 (via the N-terminus) (PubMed:16507570).</text>
</comment>
<comment type="interaction">
    <interactant intactId="EBI-157610">
        <id>Q9VNE1</id>
    </interactant>
    <interactant intactId="EBI-119676">
        <id>Q9VL21</id>
        <label>Dmel\CG5708</label>
    </interactant>
    <organismsDiffer>false</organismsDiffer>
    <experiments>3</experiments>
</comment>
<comment type="developmental stage">
    <text evidence="3">Expressed throughout development, with slightly higher levels of expression in 0-4 hour embryos, larvae and adults.</text>
</comment>
<comment type="similarity">
    <text evidence="5">Belongs to the MAD2 family.</text>
</comment>
<comment type="sequence caution" evidence="5">
    <conflict type="erroneous initiation">
        <sequence resource="EMBL-CDS" id="ACE82581"/>
    </conflict>
    <text>Extended N-terminus.</text>
</comment>
<reference evidence="8" key="1">
    <citation type="journal article" date="2004" name="Biochem. J.">
        <title>Purification of Drosophila DNA polymerase zeta by REV1 protein-affinity chromatography.</title>
        <authorList>
            <person name="Takeuchi R."/>
            <person name="Oshige M."/>
            <person name="Uchida M."/>
            <person name="Ishikawa G."/>
            <person name="Takata K."/>
            <person name="Shimanouchi K."/>
            <person name="Kanai Y."/>
            <person name="Ruike T."/>
            <person name="Morioka H."/>
            <person name="Sakaguchi K."/>
        </authorList>
    </citation>
    <scope>NUCLEOTIDE SEQUENCE [MRNA]</scope>
    <scope>FUNCTION</scope>
    <scope>IDENTIFICATION IN THE DNA POLYMERASE ZETA COMPLEX</scope>
</reference>
<reference evidence="10" key="2">
    <citation type="journal article" date="2000" name="Science">
        <title>The genome sequence of Drosophila melanogaster.</title>
        <authorList>
            <person name="Adams M.D."/>
            <person name="Celniker S.E."/>
            <person name="Holt R.A."/>
            <person name="Evans C.A."/>
            <person name="Gocayne J.D."/>
            <person name="Amanatides P.G."/>
            <person name="Scherer S.E."/>
            <person name="Li P.W."/>
            <person name="Hoskins R.A."/>
            <person name="Galle R.F."/>
            <person name="George R.A."/>
            <person name="Lewis S.E."/>
            <person name="Richards S."/>
            <person name="Ashburner M."/>
            <person name="Henderson S.N."/>
            <person name="Sutton G.G."/>
            <person name="Wortman J.R."/>
            <person name="Yandell M.D."/>
            <person name="Zhang Q."/>
            <person name="Chen L.X."/>
            <person name="Brandon R.C."/>
            <person name="Rogers Y.-H.C."/>
            <person name="Blazej R.G."/>
            <person name="Champe M."/>
            <person name="Pfeiffer B.D."/>
            <person name="Wan K.H."/>
            <person name="Doyle C."/>
            <person name="Baxter E.G."/>
            <person name="Helt G."/>
            <person name="Nelson C.R."/>
            <person name="Miklos G.L.G."/>
            <person name="Abril J.F."/>
            <person name="Agbayani A."/>
            <person name="An H.-J."/>
            <person name="Andrews-Pfannkoch C."/>
            <person name="Baldwin D."/>
            <person name="Ballew R.M."/>
            <person name="Basu A."/>
            <person name="Baxendale J."/>
            <person name="Bayraktaroglu L."/>
            <person name="Beasley E.M."/>
            <person name="Beeson K.Y."/>
            <person name="Benos P.V."/>
            <person name="Berman B.P."/>
            <person name="Bhandari D."/>
            <person name="Bolshakov S."/>
            <person name="Borkova D."/>
            <person name="Botchan M.R."/>
            <person name="Bouck J."/>
            <person name="Brokstein P."/>
            <person name="Brottier P."/>
            <person name="Burtis K.C."/>
            <person name="Busam D.A."/>
            <person name="Butler H."/>
            <person name="Cadieu E."/>
            <person name="Center A."/>
            <person name="Chandra I."/>
            <person name="Cherry J.M."/>
            <person name="Cawley S."/>
            <person name="Dahlke C."/>
            <person name="Davenport L.B."/>
            <person name="Davies P."/>
            <person name="de Pablos B."/>
            <person name="Delcher A."/>
            <person name="Deng Z."/>
            <person name="Mays A.D."/>
            <person name="Dew I."/>
            <person name="Dietz S.M."/>
            <person name="Dodson K."/>
            <person name="Doup L.E."/>
            <person name="Downes M."/>
            <person name="Dugan-Rocha S."/>
            <person name="Dunkov B.C."/>
            <person name="Dunn P."/>
            <person name="Durbin K.J."/>
            <person name="Evangelista C.C."/>
            <person name="Ferraz C."/>
            <person name="Ferriera S."/>
            <person name="Fleischmann W."/>
            <person name="Fosler C."/>
            <person name="Gabrielian A.E."/>
            <person name="Garg N.S."/>
            <person name="Gelbart W.M."/>
            <person name="Glasser K."/>
            <person name="Glodek A."/>
            <person name="Gong F."/>
            <person name="Gorrell J.H."/>
            <person name="Gu Z."/>
            <person name="Guan P."/>
            <person name="Harris M."/>
            <person name="Harris N.L."/>
            <person name="Harvey D.A."/>
            <person name="Heiman T.J."/>
            <person name="Hernandez J.R."/>
            <person name="Houck J."/>
            <person name="Hostin D."/>
            <person name="Houston K.A."/>
            <person name="Howland T.J."/>
            <person name="Wei M.-H."/>
            <person name="Ibegwam C."/>
            <person name="Jalali M."/>
            <person name="Kalush F."/>
            <person name="Karpen G.H."/>
            <person name="Ke Z."/>
            <person name="Kennison J.A."/>
            <person name="Ketchum K.A."/>
            <person name="Kimmel B.E."/>
            <person name="Kodira C.D."/>
            <person name="Kraft C.L."/>
            <person name="Kravitz S."/>
            <person name="Kulp D."/>
            <person name="Lai Z."/>
            <person name="Lasko P."/>
            <person name="Lei Y."/>
            <person name="Levitsky A.A."/>
            <person name="Li J.H."/>
            <person name="Li Z."/>
            <person name="Liang Y."/>
            <person name="Lin X."/>
            <person name="Liu X."/>
            <person name="Mattei B."/>
            <person name="McIntosh T.C."/>
            <person name="McLeod M.P."/>
            <person name="McPherson D."/>
            <person name="Merkulov G."/>
            <person name="Milshina N.V."/>
            <person name="Mobarry C."/>
            <person name="Morris J."/>
            <person name="Moshrefi A."/>
            <person name="Mount S.M."/>
            <person name="Moy M."/>
            <person name="Murphy B."/>
            <person name="Murphy L."/>
            <person name="Muzny D.M."/>
            <person name="Nelson D.L."/>
            <person name="Nelson D.R."/>
            <person name="Nelson K.A."/>
            <person name="Nixon K."/>
            <person name="Nusskern D.R."/>
            <person name="Pacleb J.M."/>
            <person name="Palazzolo M."/>
            <person name="Pittman G.S."/>
            <person name="Pan S."/>
            <person name="Pollard J."/>
            <person name="Puri V."/>
            <person name="Reese M.G."/>
            <person name="Reinert K."/>
            <person name="Remington K."/>
            <person name="Saunders R.D.C."/>
            <person name="Scheeler F."/>
            <person name="Shen H."/>
            <person name="Shue B.C."/>
            <person name="Siden-Kiamos I."/>
            <person name="Simpson M."/>
            <person name="Skupski M.P."/>
            <person name="Smith T.J."/>
            <person name="Spier E."/>
            <person name="Spradling A.C."/>
            <person name="Stapleton M."/>
            <person name="Strong R."/>
            <person name="Sun E."/>
            <person name="Svirskas R."/>
            <person name="Tector C."/>
            <person name="Turner R."/>
            <person name="Venter E."/>
            <person name="Wang A.H."/>
            <person name="Wang X."/>
            <person name="Wang Z.-Y."/>
            <person name="Wassarman D.A."/>
            <person name="Weinstock G.M."/>
            <person name="Weissenbach J."/>
            <person name="Williams S.M."/>
            <person name="Woodage T."/>
            <person name="Worley K.C."/>
            <person name="Wu D."/>
            <person name="Yang S."/>
            <person name="Yao Q.A."/>
            <person name="Ye J."/>
            <person name="Yeh R.-F."/>
            <person name="Zaveri J.S."/>
            <person name="Zhan M."/>
            <person name="Zhang G."/>
            <person name="Zhao Q."/>
            <person name="Zheng L."/>
            <person name="Zheng X.H."/>
            <person name="Zhong F.N."/>
            <person name="Zhong W."/>
            <person name="Zhou X."/>
            <person name="Zhu S.C."/>
            <person name="Zhu X."/>
            <person name="Smith H.O."/>
            <person name="Gibbs R.A."/>
            <person name="Myers E.W."/>
            <person name="Rubin G.M."/>
            <person name="Venter J.C."/>
        </authorList>
    </citation>
    <scope>NUCLEOTIDE SEQUENCE [LARGE SCALE GENOMIC DNA]</scope>
    <source>
        <strain>Berkeley</strain>
    </source>
</reference>
<reference evidence="10" key="3">
    <citation type="journal article" date="2002" name="Genome Biol.">
        <title>Annotation of the Drosophila melanogaster euchromatic genome: a systematic review.</title>
        <authorList>
            <person name="Misra S."/>
            <person name="Crosby M.A."/>
            <person name="Mungall C.J."/>
            <person name="Matthews B.B."/>
            <person name="Campbell K.S."/>
            <person name="Hradecky P."/>
            <person name="Huang Y."/>
            <person name="Kaminker J.S."/>
            <person name="Millburn G.H."/>
            <person name="Prochnik S.E."/>
            <person name="Smith C.D."/>
            <person name="Tupy J.L."/>
            <person name="Whitfield E.J."/>
            <person name="Bayraktaroglu L."/>
            <person name="Berman B.P."/>
            <person name="Bettencourt B.R."/>
            <person name="Celniker S.E."/>
            <person name="de Grey A.D.N.J."/>
            <person name="Drysdale R.A."/>
            <person name="Harris N.L."/>
            <person name="Richter J."/>
            <person name="Russo S."/>
            <person name="Schroeder A.J."/>
            <person name="Shu S.Q."/>
            <person name="Stapleton M."/>
            <person name="Yamada C."/>
            <person name="Ashburner M."/>
            <person name="Gelbart W.M."/>
            <person name="Rubin G.M."/>
            <person name="Lewis S.E."/>
        </authorList>
    </citation>
    <scope>GENOME REANNOTATION</scope>
    <source>
        <strain>Berkeley</strain>
    </source>
</reference>
<reference evidence="7" key="4">
    <citation type="submission" date="2008-06" db="EMBL/GenBank/DDBJ databases">
        <authorList>
            <person name="Carlson J."/>
            <person name="Booth B."/>
            <person name="Frise E."/>
            <person name="Park S."/>
            <person name="Wan K."/>
            <person name="Yu C."/>
            <person name="Celniker S."/>
        </authorList>
    </citation>
    <scope>NUCLEOTIDE SEQUENCE [LARGE SCALE MRNA]</scope>
</reference>
<reference evidence="5" key="5">
    <citation type="journal article" date="2006" name="J. Biol. Chem.">
        <title>Drosophila DNA polymerase zeta interacts with recombination repair protein 1, the Drosophila homologue of human abasic endonuclease 1.</title>
        <authorList>
            <person name="Takeuchi R."/>
            <person name="Ruike T."/>
            <person name="Nakamura R."/>
            <person name="Shimanouchi K."/>
            <person name="Kanai Y."/>
            <person name="Abe Y."/>
            <person name="Ihara A."/>
            <person name="Sakaguchi K."/>
        </authorList>
    </citation>
    <scope>FUNCTION</scope>
    <scope>IDENTIFICATION IN THE DNA POLYMERASE ZETA COMPLEX</scope>
    <scope>INTERACTION WITH RRP1</scope>
    <scope>DEVELOPMENTAL STAGE</scope>
</reference>
<proteinExistence type="evidence at protein level"/>
<keyword id="KW-0227">DNA damage</keyword>
<keyword id="KW-0234">DNA repair</keyword>
<keyword id="KW-1185">Reference proteome</keyword>
<gene>
    <name evidence="9" type="primary">PolZ2</name>
    <name evidence="6" type="synonym">mad2B</name>
    <name evidence="4" type="synonym">Rev7</name>
    <name evidence="9" type="ORF">CG2948</name>
</gene>
<dbReference type="EMBL" id="AB115908">
    <property type="protein sequence ID" value="BAC82838.1"/>
    <property type="molecule type" value="mRNA"/>
</dbReference>
<dbReference type="EMBL" id="AE014297">
    <property type="protein sequence ID" value="AAF52000.1"/>
    <property type="molecule type" value="Genomic_DNA"/>
</dbReference>
<dbReference type="EMBL" id="BT033058">
    <property type="protein sequence ID" value="ACE82581.1"/>
    <property type="status" value="ALT_INIT"/>
    <property type="molecule type" value="mRNA"/>
</dbReference>
<dbReference type="RefSeq" id="NP_649555.1">
    <property type="nucleotide sequence ID" value="NM_141298.2"/>
</dbReference>
<dbReference type="SMR" id="Q9VNE1"/>
<dbReference type="ComplexPortal" id="CPX-2426">
    <property type="entry name" value="DNA polymerase zeta complex"/>
</dbReference>
<dbReference type="DIP" id="DIP-20675N"/>
<dbReference type="FunCoup" id="Q9VNE1">
    <property type="interactions" value="109"/>
</dbReference>
<dbReference type="IntAct" id="Q9VNE1">
    <property type="interactions" value="102"/>
</dbReference>
<dbReference type="STRING" id="7227.FBpp0078348"/>
<dbReference type="PaxDb" id="7227-FBpp0078348"/>
<dbReference type="DNASU" id="40677"/>
<dbReference type="EnsemblMetazoa" id="FBtr0078699">
    <property type="protein sequence ID" value="FBpp0078348"/>
    <property type="gene ID" value="FBgn0037345"/>
</dbReference>
<dbReference type="GeneID" id="40677"/>
<dbReference type="KEGG" id="dme:Dmel_CG2948"/>
<dbReference type="UCSC" id="CG2948-RA">
    <property type="organism name" value="d. melanogaster"/>
</dbReference>
<dbReference type="AGR" id="FB:FBgn0037345"/>
<dbReference type="CTD" id="40677"/>
<dbReference type="FlyBase" id="FBgn0037345">
    <property type="gene designation" value="PolZ2"/>
</dbReference>
<dbReference type="VEuPathDB" id="VectorBase:FBgn0037345"/>
<dbReference type="eggNOG" id="KOG3186">
    <property type="taxonomic scope" value="Eukaryota"/>
</dbReference>
<dbReference type="GeneTree" id="ENSGT00940000153395"/>
<dbReference type="HOGENOM" id="CLU_050394_2_0_1"/>
<dbReference type="InParanoid" id="Q9VNE1"/>
<dbReference type="OMA" id="QYQEFPW"/>
<dbReference type="OrthoDB" id="21254at2759"/>
<dbReference type="PhylomeDB" id="Q9VNE1"/>
<dbReference type="Reactome" id="R-DME-110312">
    <property type="pathway name" value="Translesion synthesis by REV1"/>
</dbReference>
<dbReference type="Reactome" id="R-DME-5655862">
    <property type="pathway name" value="Translesion synthesis by POLK"/>
</dbReference>
<dbReference type="Reactome" id="R-DME-5656121">
    <property type="pathway name" value="Translesion synthesis by POLI"/>
</dbReference>
<dbReference type="SignaLink" id="Q9VNE1"/>
<dbReference type="BioGRID-ORCS" id="40677">
    <property type="hits" value="0 hits in 1 CRISPR screen"/>
</dbReference>
<dbReference type="GenomeRNAi" id="40677"/>
<dbReference type="PRO" id="PR:Q9VNE1"/>
<dbReference type="Proteomes" id="UP000000803">
    <property type="component" value="Chromosome 3R"/>
</dbReference>
<dbReference type="Bgee" id="FBgn0037345">
    <property type="expression patterns" value="Expressed in adult enteroendocrine precursor cell in adult midgut (Drosophila) and 44 other cell types or tissues"/>
</dbReference>
<dbReference type="GO" id="GO:0016035">
    <property type="term" value="C:zeta DNA polymerase complex"/>
    <property type="evidence" value="ECO:0000353"/>
    <property type="project" value="FlyBase"/>
</dbReference>
<dbReference type="GO" id="GO:0006281">
    <property type="term" value="P:DNA repair"/>
    <property type="evidence" value="ECO:0007669"/>
    <property type="project" value="UniProtKB-KW"/>
</dbReference>
<dbReference type="FunFam" id="3.30.900.10:FF:000022">
    <property type="entry name" value="IP20312p"/>
    <property type="match status" value="1"/>
</dbReference>
<dbReference type="Gene3D" id="3.30.900.10">
    <property type="entry name" value="HORMA domain"/>
    <property type="match status" value="1"/>
</dbReference>
<dbReference type="InterPro" id="IPR003511">
    <property type="entry name" value="HORMA_dom"/>
</dbReference>
<dbReference type="InterPro" id="IPR036570">
    <property type="entry name" value="HORMA_dom_sf"/>
</dbReference>
<dbReference type="InterPro" id="IPR045091">
    <property type="entry name" value="Mad2-like"/>
</dbReference>
<dbReference type="PANTHER" id="PTHR11842">
    <property type="entry name" value="MITOTIC SPINDLE ASSEMBLY CHECKPOINT PROTEIN MAD2"/>
    <property type="match status" value="1"/>
</dbReference>
<dbReference type="PANTHER" id="PTHR11842:SF10">
    <property type="entry name" value="MITOTIC SPINDLE ASSEMBLY CHECKPOINT PROTEIN MAD2B"/>
    <property type="match status" value="1"/>
</dbReference>
<dbReference type="Pfam" id="PF02301">
    <property type="entry name" value="HORMA"/>
    <property type="match status" value="1"/>
</dbReference>
<dbReference type="SUPFAM" id="SSF56019">
    <property type="entry name" value="The spindle assembly checkpoint protein mad2"/>
    <property type="match status" value="1"/>
</dbReference>
<dbReference type="PROSITE" id="PS50815">
    <property type="entry name" value="HORMA"/>
    <property type="match status" value="1"/>
</dbReference>
<evidence type="ECO:0000255" key="1">
    <source>
        <dbReference type="PROSITE-ProRule" id="PRU00109"/>
    </source>
</evidence>
<evidence type="ECO:0000269" key="2">
    <source>
    </source>
</evidence>
<evidence type="ECO:0000269" key="3">
    <source>
    </source>
</evidence>
<evidence type="ECO:0000303" key="4">
    <source>
    </source>
</evidence>
<evidence type="ECO:0000305" key="5"/>
<evidence type="ECO:0000312" key="6">
    <source>
        <dbReference type="EMBL" id="AAF52000.1"/>
    </source>
</evidence>
<evidence type="ECO:0000312" key="7">
    <source>
        <dbReference type="EMBL" id="ACE82581.1"/>
    </source>
</evidence>
<evidence type="ECO:0000312" key="8">
    <source>
        <dbReference type="EMBL" id="BAC82838.1"/>
    </source>
</evidence>
<evidence type="ECO:0000312" key="9">
    <source>
        <dbReference type="FlyBase" id="FBgn0037345"/>
    </source>
</evidence>
<evidence type="ECO:0000312" key="10">
    <source>
        <dbReference type="Proteomes" id="UP000000803"/>
    </source>
</evidence>
<accession>Q9VNE1</accession>
<accession>B3LF70</accession>
<organism evidence="10">
    <name type="scientific">Drosophila melanogaster</name>
    <name type="common">Fruit fly</name>
    <dbReference type="NCBI Taxonomy" id="7227"/>
    <lineage>
        <taxon>Eukaryota</taxon>
        <taxon>Metazoa</taxon>
        <taxon>Ecdysozoa</taxon>
        <taxon>Arthropoda</taxon>
        <taxon>Hexapoda</taxon>
        <taxon>Insecta</taxon>
        <taxon>Pterygota</taxon>
        <taxon>Neoptera</taxon>
        <taxon>Endopterygota</taxon>
        <taxon>Diptera</taxon>
        <taxon>Brachycera</taxon>
        <taxon>Muscomorpha</taxon>
        <taxon>Ephydroidea</taxon>
        <taxon>Drosophilidae</taxon>
        <taxon>Drosophila</taxon>
        <taxon>Sophophora</taxon>
    </lineage>
</organism>
<protein>
    <recommendedName>
        <fullName evidence="9">DNA polymerase zeta subunit 2</fullName>
    </recommendedName>
    <alternativeName>
        <fullName evidence="4">DNA polymerase zeta Rev7 subunit</fullName>
    </alternativeName>
    <alternativeName>
        <fullName evidence="5">DNA polymerase zeta processivity subunit</fullName>
    </alternativeName>
    <alternativeName>
        <fullName evidence="5">Revertibility protein 7</fullName>
    </alternativeName>
</protein>
<feature type="chain" id="PRO_0000448744" description="DNA polymerase zeta subunit 2">
    <location>
        <begin position="1"/>
        <end position="198"/>
    </location>
</feature>
<feature type="domain" description="HORMA" evidence="1">
    <location>
        <begin position="4"/>
        <end position="196"/>
    </location>
</feature>